<keyword id="KW-0240">DNA-directed RNA polymerase</keyword>
<keyword id="KW-0548">Nucleotidyltransferase</keyword>
<keyword id="KW-0804">Transcription</keyword>
<keyword id="KW-0808">Transferase</keyword>
<name>RPOZ_ECOLC</name>
<sequence>MARVTVQDAVEKIGNRFDLVLVAARRARQMQVGGKDPLVPEENDKTTVIALREIEEGLINNQILDVRERQEQQEQEAAELQAVTAIAEGRR</sequence>
<reference key="1">
    <citation type="submission" date="2008-02" db="EMBL/GenBank/DDBJ databases">
        <title>Complete sequence of Escherichia coli C str. ATCC 8739.</title>
        <authorList>
            <person name="Copeland A."/>
            <person name="Lucas S."/>
            <person name="Lapidus A."/>
            <person name="Glavina del Rio T."/>
            <person name="Dalin E."/>
            <person name="Tice H."/>
            <person name="Bruce D."/>
            <person name="Goodwin L."/>
            <person name="Pitluck S."/>
            <person name="Kiss H."/>
            <person name="Brettin T."/>
            <person name="Detter J.C."/>
            <person name="Han C."/>
            <person name="Kuske C.R."/>
            <person name="Schmutz J."/>
            <person name="Larimer F."/>
            <person name="Land M."/>
            <person name="Hauser L."/>
            <person name="Kyrpides N."/>
            <person name="Mikhailova N."/>
            <person name="Ingram L."/>
            <person name="Richardson P."/>
        </authorList>
    </citation>
    <scope>NUCLEOTIDE SEQUENCE [LARGE SCALE GENOMIC DNA]</scope>
    <source>
        <strain>ATCC 8739 / DSM 1576 / NBRC 3972 / NCIMB 8545 / WDCM 00012 / Crooks</strain>
    </source>
</reference>
<organism>
    <name type="scientific">Escherichia coli (strain ATCC 8739 / DSM 1576 / NBRC 3972 / NCIMB 8545 / WDCM 00012 / Crooks)</name>
    <dbReference type="NCBI Taxonomy" id="481805"/>
    <lineage>
        <taxon>Bacteria</taxon>
        <taxon>Pseudomonadati</taxon>
        <taxon>Pseudomonadota</taxon>
        <taxon>Gammaproteobacteria</taxon>
        <taxon>Enterobacterales</taxon>
        <taxon>Enterobacteriaceae</taxon>
        <taxon>Escherichia</taxon>
    </lineage>
</organism>
<comment type="function">
    <text evidence="1">Promotes RNA polymerase assembly. Latches the N- and C-terminal regions of the beta' subunit thereby facilitating its interaction with the beta and alpha subunits.</text>
</comment>
<comment type="catalytic activity">
    <reaction evidence="1">
        <text>RNA(n) + a ribonucleoside 5'-triphosphate = RNA(n+1) + diphosphate</text>
        <dbReference type="Rhea" id="RHEA:21248"/>
        <dbReference type="Rhea" id="RHEA-COMP:14527"/>
        <dbReference type="Rhea" id="RHEA-COMP:17342"/>
        <dbReference type="ChEBI" id="CHEBI:33019"/>
        <dbReference type="ChEBI" id="CHEBI:61557"/>
        <dbReference type="ChEBI" id="CHEBI:140395"/>
        <dbReference type="EC" id="2.7.7.6"/>
    </reaction>
</comment>
<comment type="subunit">
    <text evidence="1">The RNAP catalytic core consists of 2 alpha, 1 beta, 1 beta' and 1 omega subunit. When a sigma factor is associated with the core the holoenzyme is formed, which can initiate transcription.</text>
</comment>
<comment type="similarity">
    <text evidence="1">Belongs to the RNA polymerase subunit omega family.</text>
</comment>
<gene>
    <name evidence="1" type="primary">rpoZ</name>
    <name type="ordered locus">EcolC_0062</name>
</gene>
<accession>B1IYV1</accession>
<evidence type="ECO:0000255" key="1">
    <source>
        <dbReference type="HAMAP-Rule" id="MF_00366"/>
    </source>
</evidence>
<dbReference type="EC" id="2.7.7.6" evidence="1"/>
<dbReference type="EMBL" id="CP000946">
    <property type="protein sequence ID" value="ACA75748.1"/>
    <property type="molecule type" value="Genomic_DNA"/>
</dbReference>
<dbReference type="RefSeq" id="WP_000135058.1">
    <property type="nucleotide sequence ID" value="NZ_MTFT01000034.1"/>
</dbReference>
<dbReference type="SMR" id="B1IYV1"/>
<dbReference type="GeneID" id="98390719"/>
<dbReference type="KEGG" id="ecl:EcolC_0062"/>
<dbReference type="HOGENOM" id="CLU_125406_5_3_6"/>
<dbReference type="EvolutionaryTrace" id="B1IYV1"/>
<dbReference type="GO" id="GO:0000428">
    <property type="term" value="C:DNA-directed RNA polymerase complex"/>
    <property type="evidence" value="ECO:0007669"/>
    <property type="project" value="UniProtKB-KW"/>
</dbReference>
<dbReference type="GO" id="GO:0003677">
    <property type="term" value="F:DNA binding"/>
    <property type="evidence" value="ECO:0007669"/>
    <property type="project" value="UniProtKB-UniRule"/>
</dbReference>
<dbReference type="GO" id="GO:0003899">
    <property type="term" value="F:DNA-directed RNA polymerase activity"/>
    <property type="evidence" value="ECO:0007669"/>
    <property type="project" value="UniProtKB-UniRule"/>
</dbReference>
<dbReference type="GO" id="GO:0006351">
    <property type="term" value="P:DNA-templated transcription"/>
    <property type="evidence" value="ECO:0007669"/>
    <property type="project" value="UniProtKB-UniRule"/>
</dbReference>
<dbReference type="FunFam" id="3.90.940.10:FF:000001">
    <property type="entry name" value="DNA-directed RNA polymerase subunit omega"/>
    <property type="match status" value="1"/>
</dbReference>
<dbReference type="Gene3D" id="3.90.940.10">
    <property type="match status" value="1"/>
</dbReference>
<dbReference type="HAMAP" id="MF_00366">
    <property type="entry name" value="RNApol_bact_RpoZ"/>
    <property type="match status" value="1"/>
</dbReference>
<dbReference type="InterPro" id="IPR003716">
    <property type="entry name" value="DNA-dir_RNA_pol_omega"/>
</dbReference>
<dbReference type="InterPro" id="IPR006110">
    <property type="entry name" value="Pol_omega/Rpo6/RPB6"/>
</dbReference>
<dbReference type="InterPro" id="IPR036161">
    <property type="entry name" value="RPB6/omega-like_sf"/>
</dbReference>
<dbReference type="NCBIfam" id="TIGR00690">
    <property type="entry name" value="rpoZ"/>
    <property type="match status" value="1"/>
</dbReference>
<dbReference type="PANTHER" id="PTHR34476">
    <property type="entry name" value="DNA-DIRECTED RNA POLYMERASE SUBUNIT OMEGA"/>
    <property type="match status" value="1"/>
</dbReference>
<dbReference type="PANTHER" id="PTHR34476:SF1">
    <property type="entry name" value="DNA-DIRECTED RNA POLYMERASE SUBUNIT OMEGA"/>
    <property type="match status" value="1"/>
</dbReference>
<dbReference type="Pfam" id="PF01192">
    <property type="entry name" value="RNA_pol_Rpb6"/>
    <property type="match status" value="1"/>
</dbReference>
<dbReference type="SMART" id="SM01409">
    <property type="entry name" value="RNA_pol_Rpb6"/>
    <property type="match status" value="1"/>
</dbReference>
<dbReference type="SUPFAM" id="SSF63562">
    <property type="entry name" value="RPB6/omega subunit-like"/>
    <property type="match status" value="1"/>
</dbReference>
<proteinExistence type="inferred from homology"/>
<feature type="chain" id="PRO_1000079628" description="DNA-directed RNA polymerase subunit omega">
    <location>
        <begin position="1"/>
        <end position="91"/>
    </location>
</feature>
<protein>
    <recommendedName>
        <fullName evidence="1">DNA-directed RNA polymerase subunit omega</fullName>
        <shortName evidence="1">RNAP omega subunit</shortName>
        <ecNumber evidence="1">2.7.7.6</ecNumber>
    </recommendedName>
    <alternativeName>
        <fullName evidence="1">RNA polymerase omega subunit</fullName>
    </alternativeName>
    <alternativeName>
        <fullName evidence="1">Transcriptase subunit omega</fullName>
    </alternativeName>
</protein>